<name>CSHA_STAAS</name>
<dbReference type="EC" id="3.6.4.13" evidence="1"/>
<dbReference type="EMBL" id="BX571857">
    <property type="protein sequence ID" value="CAG43792.1"/>
    <property type="molecule type" value="Genomic_DNA"/>
</dbReference>
<dbReference type="RefSeq" id="WP_001178942.1">
    <property type="nucleotide sequence ID" value="NC_002953.3"/>
</dbReference>
<dbReference type="SMR" id="Q6G7M9"/>
<dbReference type="KEGG" id="sas:SAS1985"/>
<dbReference type="HOGENOM" id="CLU_003041_21_1_9"/>
<dbReference type="GO" id="GO:0005829">
    <property type="term" value="C:cytosol"/>
    <property type="evidence" value="ECO:0007669"/>
    <property type="project" value="TreeGrafter"/>
</dbReference>
<dbReference type="GO" id="GO:0005840">
    <property type="term" value="C:ribosome"/>
    <property type="evidence" value="ECO:0007669"/>
    <property type="project" value="TreeGrafter"/>
</dbReference>
<dbReference type="GO" id="GO:0005524">
    <property type="term" value="F:ATP binding"/>
    <property type="evidence" value="ECO:0007669"/>
    <property type="project" value="UniProtKB-UniRule"/>
</dbReference>
<dbReference type="GO" id="GO:0016887">
    <property type="term" value="F:ATP hydrolysis activity"/>
    <property type="evidence" value="ECO:0007669"/>
    <property type="project" value="RHEA"/>
</dbReference>
<dbReference type="GO" id="GO:0003724">
    <property type="term" value="F:RNA helicase activity"/>
    <property type="evidence" value="ECO:0007669"/>
    <property type="project" value="UniProtKB-UniRule"/>
</dbReference>
<dbReference type="GO" id="GO:0033592">
    <property type="term" value="F:RNA strand annealing activity"/>
    <property type="evidence" value="ECO:0007669"/>
    <property type="project" value="TreeGrafter"/>
</dbReference>
<dbReference type="GO" id="GO:0009409">
    <property type="term" value="P:response to cold"/>
    <property type="evidence" value="ECO:0007669"/>
    <property type="project" value="TreeGrafter"/>
</dbReference>
<dbReference type="GO" id="GO:0006401">
    <property type="term" value="P:RNA catabolic process"/>
    <property type="evidence" value="ECO:0007669"/>
    <property type="project" value="UniProtKB-UniRule"/>
</dbReference>
<dbReference type="CDD" id="cd00268">
    <property type="entry name" value="DEADc"/>
    <property type="match status" value="1"/>
</dbReference>
<dbReference type="CDD" id="cd18787">
    <property type="entry name" value="SF2_C_DEAD"/>
    <property type="match status" value="1"/>
</dbReference>
<dbReference type="FunFam" id="3.40.50.300:FF:000108">
    <property type="entry name" value="ATP-dependent RNA helicase RhlE"/>
    <property type="match status" value="1"/>
</dbReference>
<dbReference type="Gene3D" id="3.40.50.300">
    <property type="entry name" value="P-loop containing nucleotide triphosphate hydrolases"/>
    <property type="match status" value="2"/>
</dbReference>
<dbReference type="HAMAP" id="MF_01493">
    <property type="entry name" value="DEAD_helicase_CshA"/>
    <property type="match status" value="1"/>
</dbReference>
<dbReference type="InterPro" id="IPR011545">
    <property type="entry name" value="DEAD/DEAH_box_helicase_dom"/>
</dbReference>
<dbReference type="InterPro" id="IPR050547">
    <property type="entry name" value="DEAD_box_RNA_helicases"/>
</dbReference>
<dbReference type="InterPro" id="IPR030880">
    <property type="entry name" value="DEAD_helicase_CshA"/>
</dbReference>
<dbReference type="InterPro" id="IPR014001">
    <property type="entry name" value="Helicase_ATP-bd"/>
</dbReference>
<dbReference type="InterPro" id="IPR001650">
    <property type="entry name" value="Helicase_C-like"/>
</dbReference>
<dbReference type="InterPro" id="IPR027417">
    <property type="entry name" value="P-loop_NTPase"/>
</dbReference>
<dbReference type="InterPro" id="IPR000629">
    <property type="entry name" value="RNA-helicase_DEAD-box_CS"/>
</dbReference>
<dbReference type="InterPro" id="IPR014014">
    <property type="entry name" value="RNA_helicase_DEAD_Q_motif"/>
</dbReference>
<dbReference type="PANTHER" id="PTHR47963">
    <property type="entry name" value="DEAD-BOX ATP-DEPENDENT RNA HELICASE 47, MITOCHONDRIAL"/>
    <property type="match status" value="1"/>
</dbReference>
<dbReference type="PANTHER" id="PTHR47963:SF5">
    <property type="entry name" value="DEAD-BOX ATP-DEPENDENT RNA HELICASE CSHA"/>
    <property type="match status" value="1"/>
</dbReference>
<dbReference type="Pfam" id="PF00270">
    <property type="entry name" value="DEAD"/>
    <property type="match status" value="1"/>
</dbReference>
<dbReference type="Pfam" id="PF00271">
    <property type="entry name" value="Helicase_C"/>
    <property type="match status" value="1"/>
</dbReference>
<dbReference type="SMART" id="SM00487">
    <property type="entry name" value="DEXDc"/>
    <property type="match status" value="1"/>
</dbReference>
<dbReference type="SMART" id="SM00490">
    <property type="entry name" value="HELICc"/>
    <property type="match status" value="1"/>
</dbReference>
<dbReference type="SUPFAM" id="SSF52540">
    <property type="entry name" value="P-loop containing nucleoside triphosphate hydrolases"/>
    <property type="match status" value="1"/>
</dbReference>
<dbReference type="PROSITE" id="PS00039">
    <property type="entry name" value="DEAD_ATP_HELICASE"/>
    <property type="match status" value="1"/>
</dbReference>
<dbReference type="PROSITE" id="PS51192">
    <property type="entry name" value="HELICASE_ATP_BIND_1"/>
    <property type="match status" value="1"/>
</dbReference>
<dbReference type="PROSITE" id="PS51194">
    <property type="entry name" value="HELICASE_CTER"/>
    <property type="match status" value="1"/>
</dbReference>
<dbReference type="PROSITE" id="PS51195">
    <property type="entry name" value="Q_MOTIF"/>
    <property type="match status" value="1"/>
</dbReference>
<protein>
    <recommendedName>
        <fullName evidence="1">DEAD-box ATP-dependent RNA helicase CshA</fullName>
        <ecNumber evidence="1">3.6.4.13</ecNumber>
    </recommendedName>
</protein>
<accession>Q6G7M9</accession>
<comment type="function">
    <text evidence="1">DEAD-box RNA helicase possibly involved in RNA degradation. Unwinds dsRNA in both 5'- and 3'-directions, has RNA-dependent ATPase activity.</text>
</comment>
<comment type="catalytic activity">
    <reaction evidence="1">
        <text>ATP + H2O = ADP + phosphate + H(+)</text>
        <dbReference type="Rhea" id="RHEA:13065"/>
        <dbReference type="ChEBI" id="CHEBI:15377"/>
        <dbReference type="ChEBI" id="CHEBI:15378"/>
        <dbReference type="ChEBI" id="CHEBI:30616"/>
        <dbReference type="ChEBI" id="CHEBI:43474"/>
        <dbReference type="ChEBI" id="CHEBI:456216"/>
        <dbReference type="EC" id="3.6.4.13"/>
    </reaction>
</comment>
<comment type="subunit">
    <text evidence="1">Oligomerizes, may be a member of the RNA degradosome.</text>
</comment>
<comment type="subcellular location">
    <subcellularLocation>
        <location evidence="1">Cytoplasm</location>
    </subcellularLocation>
</comment>
<comment type="similarity">
    <text evidence="1">Belongs to the DEAD box helicase family. CshA subfamily.</text>
</comment>
<feature type="chain" id="PRO_0000284821" description="DEAD-box ATP-dependent RNA helicase CshA">
    <location>
        <begin position="1"/>
        <end position="506"/>
    </location>
</feature>
<feature type="domain" description="Helicase ATP-binding" evidence="1">
    <location>
        <begin position="33"/>
        <end position="203"/>
    </location>
</feature>
<feature type="domain" description="Helicase C-terminal" evidence="1">
    <location>
        <begin position="214"/>
        <end position="375"/>
    </location>
</feature>
<feature type="region of interest" description="Disordered" evidence="2">
    <location>
        <begin position="436"/>
        <end position="506"/>
    </location>
</feature>
<feature type="short sequence motif" description="Q motif">
    <location>
        <begin position="2"/>
        <end position="30"/>
    </location>
</feature>
<feature type="short sequence motif" description="DEAD box">
    <location>
        <begin position="150"/>
        <end position="153"/>
    </location>
</feature>
<feature type="compositionally biased region" description="Basic residues" evidence="2">
    <location>
        <begin position="468"/>
        <end position="480"/>
    </location>
</feature>
<feature type="binding site" evidence="1">
    <location>
        <begin position="46"/>
        <end position="53"/>
    </location>
    <ligand>
        <name>ATP</name>
        <dbReference type="ChEBI" id="CHEBI:30616"/>
    </ligand>
</feature>
<evidence type="ECO:0000255" key="1">
    <source>
        <dbReference type="HAMAP-Rule" id="MF_01493"/>
    </source>
</evidence>
<evidence type="ECO:0000256" key="2">
    <source>
        <dbReference type="SAM" id="MobiDB-lite"/>
    </source>
</evidence>
<reference key="1">
    <citation type="journal article" date="2004" name="Proc. Natl. Acad. Sci. U.S.A.">
        <title>Complete genomes of two clinical Staphylococcus aureus strains: evidence for the rapid evolution of virulence and drug resistance.</title>
        <authorList>
            <person name="Holden M.T.G."/>
            <person name="Feil E.J."/>
            <person name="Lindsay J.A."/>
            <person name="Peacock S.J."/>
            <person name="Day N.P.J."/>
            <person name="Enright M.C."/>
            <person name="Foster T.J."/>
            <person name="Moore C.E."/>
            <person name="Hurst L."/>
            <person name="Atkin R."/>
            <person name="Barron A."/>
            <person name="Bason N."/>
            <person name="Bentley S.D."/>
            <person name="Chillingworth C."/>
            <person name="Chillingworth T."/>
            <person name="Churcher C."/>
            <person name="Clark L."/>
            <person name="Corton C."/>
            <person name="Cronin A."/>
            <person name="Doggett J."/>
            <person name="Dowd L."/>
            <person name="Feltwell T."/>
            <person name="Hance Z."/>
            <person name="Harris B."/>
            <person name="Hauser H."/>
            <person name="Holroyd S."/>
            <person name="Jagels K."/>
            <person name="James K.D."/>
            <person name="Lennard N."/>
            <person name="Line A."/>
            <person name="Mayes R."/>
            <person name="Moule S."/>
            <person name="Mungall K."/>
            <person name="Ormond D."/>
            <person name="Quail M.A."/>
            <person name="Rabbinowitsch E."/>
            <person name="Rutherford K.M."/>
            <person name="Sanders M."/>
            <person name="Sharp S."/>
            <person name="Simmonds M."/>
            <person name="Stevens K."/>
            <person name="Whitehead S."/>
            <person name="Barrell B.G."/>
            <person name="Spratt B.G."/>
            <person name="Parkhill J."/>
        </authorList>
    </citation>
    <scope>NUCLEOTIDE SEQUENCE [LARGE SCALE GENOMIC DNA]</scope>
    <source>
        <strain>MSSA476</strain>
    </source>
</reference>
<proteinExistence type="inferred from homology"/>
<gene>
    <name evidence="1" type="primary">cshA</name>
    <name type="ordered locus">SAS1985</name>
</gene>
<sequence>MQNFKELGISDNTVQSLESMGFKEPTPIQKDSIPYALQGIDILGQAQTGTGKTGAFGIPLIEKVVGKQGVQSLILAPTRELAMQVAEQLREFSRGQGVQVVTVFGGMPIERQIKALKKGPQIVVGTPGRVIDHLNRRTLKTDGIHTLILDEADEMMNMGFIDDMRFIMDKIPAVQRQTMLFSATMPKAIQALVQQFMKSPKIIKTMNNEMSDPQIEEFYTIVKELEKFDTFTNFLDVHQPELAIVFGRTKRRVDELTSALISKGYKAEGLHGDITQAKRLEVLKKFKNDQINILVATDVAARGLDISGVSHVYNFDIPQDTESYTHRIGRTGRAGKEGIAVTFVNPIEMDYIRQIEDANGRKMSALRPPHRKEVLQAREDDIKEKVENWMSKESESRLKRISTELLNEYNDVDLVAALLQELVEANDEVEVQLTFEKPLSRKGRNGKPSGSRNRNSKRGNPKFDSKSKRSKGYSSKKKSTKKFDRKEKSSGGSRPMKGRTFADHQK</sequence>
<organism>
    <name type="scientific">Staphylococcus aureus (strain MSSA476)</name>
    <dbReference type="NCBI Taxonomy" id="282459"/>
    <lineage>
        <taxon>Bacteria</taxon>
        <taxon>Bacillati</taxon>
        <taxon>Bacillota</taxon>
        <taxon>Bacilli</taxon>
        <taxon>Bacillales</taxon>
        <taxon>Staphylococcaceae</taxon>
        <taxon>Staphylococcus</taxon>
    </lineage>
</organism>
<keyword id="KW-0067">ATP-binding</keyword>
<keyword id="KW-0963">Cytoplasm</keyword>
<keyword id="KW-0347">Helicase</keyword>
<keyword id="KW-0378">Hydrolase</keyword>
<keyword id="KW-0547">Nucleotide-binding</keyword>
<keyword id="KW-0694">RNA-binding</keyword>
<keyword id="KW-0346">Stress response</keyword>